<proteinExistence type="predicted"/>
<name>Y1163_AQUAE</name>
<gene>
    <name type="ordered locus">aq_1163</name>
</gene>
<keyword id="KW-1185">Reference proteome</keyword>
<sequence length="125" mass="14895">MWARVLKLICEELGDRELFLLEADKDLKWFGAPVKEVCEKVNFDARNSEIAQTVKASLQEVQGEGWIVYVDPFNNFADIYEANKPRYRNRWNQERPYDISETRFRVGFFPSREEAYDSSSRFQRE</sequence>
<accession>O67227</accession>
<feature type="chain" id="PRO_0000186905" description="Uncharacterized protein aq_1163">
    <location>
        <begin position="1"/>
        <end position="125"/>
    </location>
</feature>
<reference key="1">
    <citation type="journal article" date="1998" name="Nature">
        <title>The complete genome of the hyperthermophilic bacterium Aquifex aeolicus.</title>
        <authorList>
            <person name="Deckert G."/>
            <person name="Warren P.V."/>
            <person name="Gaasterland T."/>
            <person name="Young W.G."/>
            <person name="Lenox A.L."/>
            <person name="Graham D.E."/>
            <person name="Overbeek R."/>
            <person name="Snead M.A."/>
            <person name="Keller M."/>
            <person name="Aujay M."/>
            <person name="Huber R."/>
            <person name="Feldman R.A."/>
            <person name="Short J.M."/>
            <person name="Olsen G.J."/>
            <person name="Swanson R.V."/>
        </authorList>
    </citation>
    <scope>NUCLEOTIDE SEQUENCE [LARGE SCALE GENOMIC DNA]</scope>
    <source>
        <strain>VF5</strain>
    </source>
</reference>
<dbReference type="EMBL" id="AE000657">
    <property type="protein sequence ID" value="AAC07189.1"/>
    <property type="molecule type" value="Genomic_DNA"/>
</dbReference>
<dbReference type="PIR" id="H70399">
    <property type="entry name" value="H70399"/>
</dbReference>
<dbReference type="RefSeq" id="NP_213791.1">
    <property type="nucleotide sequence ID" value="NC_000918.1"/>
</dbReference>
<dbReference type="RefSeq" id="WP_010880729.1">
    <property type="nucleotide sequence ID" value="NC_000918.1"/>
</dbReference>
<dbReference type="SMR" id="O67227"/>
<dbReference type="STRING" id="224324.aq_1163"/>
<dbReference type="EnsemblBacteria" id="AAC07189">
    <property type="protein sequence ID" value="AAC07189"/>
    <property type="gene ID" value="aq_1163"/>
</dbReference>
<dbReference type="KEGG" id="aae:aq_1163"/>
<dbReference type="HOGENOM" id="CLU_1988002_0_0_0"/>
<dbReference type="InParanoid" id="O67227"/>
<dbReference type="OrthoDB" id="14337at2"/>
<dbReference type="Proteomes" id="UP000000798">
    <property type="component" value="Chromosome"/>
</dbReference>
<organism>
    <name type="scientific">Aquifex aeolicus (strain VF5)</name>
    <dbReference type="NCBI Taxonomy" id="224324"/>
    <lineage>
        <taxon>Bacteria</taxon>
        <taxon>Pseudomonadati</taxon>
        <taxon>Aquificota</taxon>
        <taxon>Aquificia</taxon>
        <taxon>Aquificales</taxon>
        <taxon>Aquificaceae</taxon>
        <taxon>Aquifex</taxon>
    </lineage>
</organism>
<protein>
    <recommendedName>
        <fullName>Uncharacterized protein aq_1163</fullName>
    </recommendedName>
</protein>